<evidence type="ECO:0000250" key="1"/>
<evidence type="ECO:0000255" key="2"/>
<evidence type="ECO:0000305" key="3"/>
<comment type="function">
    <text evidence="1">One gap junction consists of a cluster of closely packed pairs of transmembrane channels, the connexons, through which materials of low MW diffuse from one cell to a neighboring cell.</text>
</comment>
<comment type="subunit">
    <text evidence="1">A connexon is composed of a hexamer of connexins. Interacts with CNST (By similarity).</text>
</comment>
<comment type="subcellular location">
    <subcellularLocation>
        <location evidence="1">Cell membrane</location>
        <topology evidence="1">Multi-pass membrane protein</topology>
    </subcellularLocation>
    <subcellularLocation>
        <location evidence="1">Cell junction</location>
        <location evidence="1">Gap junction</location>
    </subcellularLocation>
</comment>
<comment type="similarity">
    <text evidence="3">Belongs to the connexin family.</text>
</comment>
<feature type="chain" id="PRO_0000313008" description="Gap junction beta-2 protein">
    <location>
        <begin position="1"/>
        <end position="226"/>
    </location>
</feature>
<feature type="topological domain" description="Cytoplasmic" evidence="2">
    <location>
        <begin position="1"/>
        <end position="20"/>
    </location>
</feature>
<feature type="transmembrane region" description="Helical" evidence="2">
    <location>
        <begin position="21"/>
        <end position="40"/>
    </location>
</feature>
<feature type="topological domain" description="Extracellular" evidence="2">
    <location>
        <begin position="41"/>
        <end position="75"/>
    </location>
</feature>
<feature type="transmembrane region" description="Helical" evidence="2">
    <location>
        <begin position="76"/>
        <end position="98"/>
    </location>
</feature>
<feature type="topological domain" description="Cytoplasmic" evidence="2">
    <location>
        <begin position="99"/>
        <end position="131"/>
    </location>
</feature>
<feature type="transmembrane region" description="Helical" evidence="2">
    <location>
        <begin position="132"/>
        <end position="154"/>
    </location>
</feature>
<feature type="topological domain" description="Extracellular" evidence="2">
    <location>
        <begin position="155"/>
        <end position="192"/>
    </location>
</feature>
<feature type="transmembrane region" description="Helical" evidence="2">
    <location>
        <begin position="193"/>
        <end position="215"/>
    </location>
</feature>
<feature type="topological domain" description="Cytoplasmic" evidence="2">
    <location>
        <begin position="216"/>
        <end position="226"/>
    </location>
</feature>
<feature type="disulfide bond" evidence="1">
    <location>
        <begin position="53"/>
        <end position="180"/>
    </location>
</feature>
<feature type="disulfide bond" evidence="1">
    <location>
        <begin position="60"/>
        <end position="174"/>
    </location>
</feature>
<feature type="disulfide bond" evidence="1">
    <location>
        <begin position="64"/>
        <end position="169"/>
    </location>
</feature>
<dbReference type="EMBL" id="BC133597">
    <property type="protein sequence ID" value="AAI33598.1"/>
    <property type="molecule type" value="mRNA"/>
</dbReference>
<dbReference type="RefSeq" id="NP_001077106.1">
    <property type="nucleotide sequence ID" value="NM_001083637.2"/>
</dbReference>
<dbReference type="SMR" id="A2VE67"/>
<dbReference type="FunCoup" id="A2VE67">
    <property type="interactions" value="143"/>
</dbReference>
<dbReference type="STRING" id="9913.ENSBTAP00000023167"/>
<dbReference type="PaxDb" id="9913-ENSBTAP00000023167"/>
<dbReference type="Ensembl" id="ENSBTAT00000023167.7">
    <property type="protein sequence ID" value="ENSBTAP00000023167.5"/>
    <property type="gene ID" value="ENSBTAG00000017425.7"/>
</dbReference>
<dbReference type="GeneID" id="407154"/>
<dbReference type="KEGG" id="bta:407154"/>
<dbReference type="CTD" id="2706"/>
<dbReference type="VEuPathDB" id="HostDB:ENSBTAG00000017425"/>
<dbReference type="VGNC" id="VGNC:29377">
    <property type="gene designation" value="GJB2"/>
</dbReference>
<dbReference type="eggNOG" id="ENOG502QWM8">
    <property type="taxonomic scope" value="Eukaryota"/>
</dbReference>
<dbReference type="GeneTree" id="ENSGT01030000234513"/>
<dbReference type="HOGENOM" id="CLU_037388_4_1_1"/>
<dbReference type="InParanoid" id="A2VE67"/>
<dbReference type="OMA" id="RMVKCNA"/>
<dbReference type="OrthoDB" id="8934037at2759"/>
<dbReference type="TreeFam" id="TF329606"/>
<dbReference type="Reactome" id="R-BTA-190872">
    <property type="pathway name" value="Transport of connexons to the plasma membrane"/>
</dbReference>
<dbReference type="Proteomes" id="UP000009136">
    <property type="component" value="Chromosome 12"/>
</dbReference>
<dbReference type="Bgee" id="ENSBTAG00000017425">
    <property type="expression patterns" value="Expressed in rumen papilla and 87 other cell types or tissues"/>
</dbReference>
<dbReference type="GO" id="GO:0005922">
    <property type="term" value="C:connexin complex"/>
    <property type="evidence" value="ECO:0000250"/>
    <property type="project" value="UniProtKB"/>
</dbReference>
<dbReference type="GO" id="GO:0005886">
    <property type="term" value="C:plasma membrane"/>
    <property type="evidence" value="ECO:0000250"/>
    <property type="project" value="UniProtKB"/>
</dbReference>
<dbReference type="GO" id="GO:0005509">
    <property type="term" value="F:calcium ion binding"/>
    <property type="evidence" value="ECO:0000250"/>
    <property type="project" value="UniProtKB"/>
</dbReference>
<dbReference type="GO" id="GO:0005243">
    <property type="term" value="F:gap junction channel activity"/>
    <property type="evidence" value="ECO:0000250"/>
    <property type="project" value="UniProtKB"/>
</dbReference>
<dbReference type="GO" id="GO:1903763">
    <property type="term" value="F:gap junction channel activity involved in cell communication by electrical coupling"/>
    <property type="evidence" value="ECO:0007669"/>
    <property type="project" value="Ensembl"/>
</dbReference>
<dbReference type="GO" id="GO:0042802">
    <property type="term" value="F:identical protein binding"/>
    <property type="evidence" value="ECO:0007669"/>
    <property type="project" value="Ensembl"/>
</dbReference>
<dbReference type="GO" id="GO:0007267">
    <property type="term" value="P:cell-cell signaling"/>
    <property type="evidence" value="ECO:0000250"/>
    <property type="project" value="UniProtKB"/>
</dbReference>
<dbReference type="GO" id="GO:0016264">
    <property type="term" value="P:gap junction assembly"/>
    <property type="evidence" value="ECO:0007669"/>
    <property type="project" value="Ensembl"/>
</dbReference>
<dbReference type="GO" id="GO:1990349">
    <property type="term" value="P:gap junction-mediated intercellular transport"/>
    <property type="evidence" value="ECO:0000250"/>
    <property type="project" value="UniProtKB"/>
</dbReference>
<dbReference type="GO" id="GO:0007605">
    <property type="term" value="P:sensory perception of sound"/>
    <property type="evidence" value="ECO:0007669"/>
    <property type="project" value="UniProtKB-KW"/>
</dbReference>
<dbReference type="FunFam" id="1.20.1440.80:FF:000001">
    <property type="entry name" value="Gap junction alpha-1"/>
    <property type="match status" value="1"/>
</dbReference>
<dbReference type="Gene3D" id="1.20.1440.80">
    <property type="entry name" value="Gap junction channel protein cysteine-rich domain"/>
    <property type="match status" value="1"/>
</dbReference>
<dbReference type="InterPro" id="IPR000500">
    <property type="entry name" value="Connexin"/>
</dbReference>
<dbReference type="InterPro" id="IPR002268">
    <property type="entry name" value="Connexin26"/>
</dbReference>
<dbReference type="InterPro" id="IPR019570">
    <property type="entry name" value="Connexin_CCC"/>
</dbReference>
<dbReference type="InterPro" id="IPR017990">
    <property type="entry name" value="Connexin_CS"/>
</dbReference>
<dbReference type="InterPro" id="IPR013092">
    <property type="entry name" value="Connexin_N"/>
</dbReference>
<dbReference type="InterPro" id="IPR038359">
    <property type="entry name" value="Connexin_N_sf"/>
</dbReference>
<dbReference type="PANTHER" id="PTHR11984">
    <property type="entry name" value="CONNEXIN"/>
    <property type="match status" value="1"/>
</dbReference>
<dbReference type="PANTHER" id="PTHR11984:SF46">
    <property type="entry name" value="GAP JUNCTION BETA-2 PROTEIN"/>
    <property type="match status" value="1"/>
</dbReference>
<dbReference type="Pfam" id="PF00029">
    <property type="entry name" value="Connexin"/>
    <property type="match status" value="1"/>
</dbReference>
<dbReference type="PRINTS" id="PR00206">
    <property type="entry name" value="CONNEXIN"/>
</dbReference>
<dbReference type="PRINTS" id="PR01139">
    <property type="entry name" value="CONNEXINB2"/>
</dbReference>
<dbReference type="SMART" id="SM00037">
    <property type="entry name" value="CNX"/>
    <property type="match status" value="1"/>
</dbReference>
<dbReference type="SMART" id="SM01089">
    <property type="entry name" value="Connexin_CCC"/>
    <property type="match status" value="1"/>
</dbReference>
<dbReference type="PROSITE" id="PS00407">
    <property type="entry name" value="CONNEXINS_1"/>
    <property type="match status" value="1"/>
</dbReference>
<dbReference type="PROSITE" id="PS00408">
    <property type="entry name" value="CONNEXINS_2"/>
    <property type="match status" value="1"/>
</dbReference>
<reference key="1">
    <citation type="submission" date="2007-02" db="EMBL/GenBank/DDBJ databases">
        <authorList>
            <consortium name="NIH - Mammalian Gene Collection (MGC) project"/>
        </authorList>
    </citation>
    <scope>NUCLEOTIDE SEQUENCE [LARGE SCALE MRNA]</scope>
    <source>
        <strain>Hereford</strain>
        <tissue>Thymus</tissue>
    </source>
</reference>
<proteinExistence type="evidence at transcript level"/>
<sequence>MDWGGLHTILGGVNKHSTSIGKIWLTVLFIFRIMILVVAAKEVWGDEQADFVCNTLQPGCKNVCYDHYFPISHIRLWALQLIFVSTPALLVAMHVAYYRHEKKRKFIRGEIKTEFKDIEEIKKQKVRIEGSLWWTYTGSIFFRVIFEAAFMYVFYVMYDGFAMQRLVKCNAWPCPNTVDCFVSRPTEKTVFTVFMIAVSGICILLNVTELCYLLIRFCSGKSKKPV</sequence>
<gene>
    <name type="primary">GJB2</name>
</gene>
<keyword id="KW-0965">Cell junction</keyword>
<keyword id="KW-1003">Cell membrane</keyword>
<keyword id="KW-1015">Disulfide bond</keyword>
<keyword id="KW-0303">Gap junction</keyword>
<keyword id="KW-1009">Hearing</keyword>
<keyword id="KW-0472">Membrane</keyword>
<keyword id="KW-1185">Reference proteome</keyword>
<keyword id="KW-0812">Transmembrane</keyword>
<keyword id="KW-1133">Transmembrane helix</keyword>
<protein>
    <recommendedName>
        <fullName>Gap junction beta-2 protein</fullName>
    </recommendedName>
    <alternativeName>
        <fullName>Connexin-26</fullName>
        <shortName>Cx26</shortName>
    </alternativeName>
</protein>
<organism>
    <name type="scientific">Bos taurus</name>
    <name type="common">Bovine</name>
    <dbReference type="NCBI Taxonomy" id="9913"/>
    <lineage>
        <taxon>Eukaryota</taxon>
        <taxon>Metazoa</taxon>
        <taxon>Chordata</taxon>
        <taxon>Craniata</taxon>
        <taxon>Vertebrata</taxon>
        <taxon>Euteleostomi</taxon>
        <taxon>Mammalia</taxon>
        <taxon>Eutheria</taxon>
        <taxon>Laurasiatheria</taxon>
        <taxon>Artiodactyla</taxon>
        <taxon>Ruminantia</taxon>
        <taxon>Pecora</taxon>
        <taxon>Bovidae</taxon>
        <taxon>Bovinae</taxon>
        <taxon>Bos</taxon>
    </lineage>
</organism>
<accession>A2VE67</accession>
<name>CXB2_BOVIN</name>